<name>RS7_YERE8</name>
<reference key="1">
    <citation type="journal article" date="2006" name="PLoS Genet.">
        <title>The complete genome sequence and comparative genome analysis of the high pathogenicity Yersinia enterocolitica strain 8081.</title>
        <authorList>
            <person name="Thomson N.R."/>
            <person name="Howard S."/>
            <person name="Wren B.W."/>
            <person name="Holden M.T.G."/>
            <person name="Crossman L."/>
            <person name="Challis G.L."/>
            <person name="Churcher C."/>
            <person name="Mungall K."/>
            <person name="Brooks K."/>
            <person name="Chillingworth T."/>
            <person name="Feltwell T."/>
            <person name="Abdellah Z."/>
            <person name="Hauser H."/>
            <person name="Jagels K."/>
            <person name="Maddison M."/>
            <person name="Moule S."/>
            <person name="Sanders M."/>
            <person name="Whitehead S."/>
            <person name="Quail M.A."/>
            <person name="Dougan G."/>
            <person name="Parkhill J."/>
            <person name="Prentice M.B."/>
        </authorList>
    </citation>
    <scope>NUCLEOTIDE SEQUENCE [LARGE SCALE GENOMIC DNA]</scope>
    <source>
        <strain>NCTC 13174 / 8081</strain>
    </source>
</reference>
<proteinExistence type="inferred from homology"/>
<comment type="function">
    <text evidence="1">One of the primary rRNA binding proteins, it binds directly to 16S rRNA where it nucleates assembly of the head domain of the 30S subunit. Is located at the subunit interface close to the decoding center, probably blocks exit of the E-site tRNA.</text>
</comment>
<comment type="subunit">
    <text evidence="1">Part of the 30S ribosomal subunit. Contacts proteins S9 and S11.</text>
</comment>
<comment type="similarity">
    <text evidence="1">Belongs to the universal ribosomal protein uS7 family.</text>
</comment>
<gene>
    <name evidence="1" type="primary">rpsG</name>
    <name type="ordered locus">YE3929</name>
</gene>
<protein>
    <recommendedName>
        <fullName evidence="1">Small ribosomal subunit protein uS7</fullName>
    </recommendedName>
    <alternativeName>
        <fullName evidence="2">30S ribosomal protein S7</fullName>
    </alternativeName>
</protein>
<organism>
    <name type="scientific">Yersinia enterocolitica serotype O:8 / biotype 1B (strain NCTC 13174 / 8081)</name>
    <dbReference type="NCBI Taxonomy" id="393305"/>
    <lineage>
        <taxon>Bacteria</taxon>
        <taxon>Pseudomonadati</taxon>
        <taxon>Pseudomonadota</taxon>
        <taxon>Gammaproteobacteria</taxon>
        <taxon>Enterobacterales</taxon>
        <taxon>Yersiniaceae</taxon>
        <taxon>Yersinia</taxon>
    </lineage>
</organism>
<dbReference type="EMBL" id="AM286415">
    <property type="protein sequence ID" value="CAL13948.1"/>
    <property type="molecule type" value="Genomic_DNA"/>
</dbReference>
<dbReference type="RefSeq" id="WP_002212324.1">
    <property type="nucleotide sequence ID" value="NC_008800.1"/>
</dbReference>
<dbReference type="RefSeq" id="YP_001008074.1">
    <property type="nucleotide sequence ID" value="NC_008800.1"/>
</dbReference>
<dbReference type="SMR" id="A1JS56"/>
<dbReference type="GeneID" id="97454225"/>
<dbReference type="KEGG" id="yen:YE3929"/>
<dbReference type="PATRIC" id="fig|393305.7.peg.4179"/>
<dbReference type="eggNOG" id="COG0049">
    <property type="taxonomic scope" value="Bacteria"/>
</dbReference>
<dbReference type="HOGENOM" id="CLU_072226_1_1_6"/>
<dbReference type="OrthoDB" id="9807653at2"/>
<dbReference type="Proteomes" id="UP000000642">
    <property type="component" value="Chromosome"/>
</dbReference>
<dbReference type="GO" id="GO:0015935">
    <property type="term" value="C:small ribosomal subunit"/>
    <property type="evidence" value="ECO:0007669"/>
    <property type="project" value="InterPro"/>
</dbReference>
<dbReference type="GO" id="GO:0019843">
    <property type="term" value="F:rRNA binding"/>
    <property type="evidence" value="ECO:0007669"/>
    <property type="project" value="UniProtKB-UniRule"/>
</dbReference>
<dbReference type="GO" id="GO:0003735">
    <property type="term" value="F:structural constituent of ribosome"/>
    <property type="evidence" value="ECO:0007669"/>
    <property type="project" value="InterPro"/>
</dbReference>
<dbReference type="GO" id="GO:0000049">
    <property type="term" value="F:tRNA binding"/>
    <property type="evidence" value="ECO:0007669"/>
    <property type="project" value="UniProtKB-UniRule"/>
</dbReference>
<dbReference type="GO" id="GO:0006412">
    <property type="term" value="P:translation"/>
    <property type="evidence" value="ECO:0007669"/>
    <property type="project" value="UniProtKB-UniRule"/>
</dbReference>
<dbReference type="CDD" id="cd14869">
    <property type="entry name" value="uS7_Bacteria"/>
    <property type="match status" value="1"/>
</dbReference>
<dbReference type="FunFam" id="1.10.455.10:FF:000001">
    <property type="entry name" value="30S ribosomal protein S7"/>
    <property type="match status" value="1"/>
</dbReference>
<dbReference type="Gene3D" id="1.10.455.10">
    <property type="entry name" value="Ribosomal protein S7 domain"/>
    <property type="match status" value="1"/>
</dbReference>
<dbReference type="HAMAP" id="MF_00480_B">
    <property type="entry name" value="Ribosomal_uS7_B"/>
    <property type="match status" value="1"/>
</dbReference>
<dbReference type="InterPro" id="IPR000235">
    <property type="entry name" value="Ribosomal_uS7"/>
</dbReference>
<dbReference type="InterPro" id="IPR005717">
    <property type="entry name" value="Ribosomal_uS7_bac/org-type"/>
</dbReference>
<dbReference type="InterPro" id="IPR020606">
    <property type="entry name" value="Ribosomal_uS7_CS"/>
</dbReference>
<dbReference type="InterPro" id="IPR023798">
    <property type="entry name" value="Ribosomal_uS7_dom"/>
</dbReference>
<dbReference type="InterPro" id="IPR036823">
    <property type="entry name" value="Ribosomal_uS7_dom_sf"/>
</dbReference>
<dbReference type="NCBIfam" id="TIGR01029">
    <property type="entry name" value="rpsG_bact"/>
    <property type="match status" value="1"/>
</dbReference>
<dbReference type="PANTHER" id="PTHR11205">
    <property type="entry name" value="RIBOSOMAL PROTEIN S7"/>
    <property type="match status" value="1"/>
</dbReference>
<dbReference type="Pfam" id="PF00177">
    <property type="entry name" value="Ribosomal_S7"/>
    <property type="match status" value="1"/>
</dbReference>
<dbReference type="PIRSF" id="PIRSF002122">
    <property type="entry name" value="RPS7p_RPS7a_RPS5e_RPS7o"/>
    <property type="match status" value="1"/>
</dbReference>
<dbReference type="SUPFAM" id="SSF47973">
    <property type="entry name" value="Ribosomal protein S7"/>
    <property type="match status" value="1"/>
</dbReference>
<dbReference type="PROSITE" id="PS00052">
    <property type="entry name" value="RIBOSOMAL_S7"/>
    <property type="match status" value="1"/>
</dbReference>
<evidence type="ECO:0000255" key="1">
    <source>
        <dbReference type="HAMAP-Rule" id="MF_00480"/>
    </source>
</evidence>
<evidence type="ECO:0000305" key="2"/>
<keyword id="KW-0687">Ribonucleoprotein</keyword>
<keyword id="KW-0689">Ribosomal protein</keyword>
<keyword id="KW-0694">RNA-binding</keyword>
<keyword id="KW-0699">rRNA-binding</keyword>
<keyword id="KW-0820">tRNA-binding</keyword>
<sequence length="156" mass="17606">MPRRRVIGQRKILPDPKFGSELLAKFVNILMVDGKKSTAEAIVYTALETLAQRSGKDFLEAFEVALDNVRPTVEVKSRRVGGSTYQVPVEVRPVRRNALAMRWIVDAARKRGDKSMALRLANELSDAAENKGSAVKKREDVHRMAEANKAFAHYRW</sequence>
<feature type="chain" id="PRO_1000014320" description="Small ribosomal subunit protein uS7">
    <location>
        <begin position="1"/>
        <end position="156"/>
    </location>
</feature>
<accession>A1JS56</accession>